<organism>
    <name type="scientific">Sodalis glossinidius (strain morsitans)</name>
    <dbReference type="NCBI Taxonomy" id="343509"/>
    <lineage>
        <taxon>Bacteria</taxon>
        <taxon>Pseudomonadati</taxon>
        <taxon>Pseudomonadota</taxon>
        <taxon>Gammaproteobacteria</taxon>
        <taxon>Enterobacterales</taxon>
        <taxon>Bruguierivoracaceae</taxon>
        <taxon>Sodalis</taxon>
    </lineage>
</organism>
<reference key="1">
    <citation type="journal article" date="2006" name="Genome Res.">
        <title>Massive genome erosion and functional adaptations provide insights into the symbiotic lifestyle of Sodalis glossinidius in the tsetse host.</title>
        <authorList>
            <person name="Toh H."/>
            <person name="Weiss B.L."/>
            <person name="Perkin S.A.H."/>
            <person name="Yamashita A."/>
            <person name="Oshima K."/>
            <person name="Hattori M."/>
            <person name="Aksoy S."/>
        </authorList>
    </citation>
    <scope>NUCLEOTIDE SEQUENCE [LARGE SCALE GENOMIC DNA]</scope>
    <source>
        <strain>morsitans</strain>
    </source>
</reference>
<comment type="function">
    <text evidence="1">Forms part of the ribosomal stalk which helps the ribosome interact with GTP-bound translation factors. Is thus essential for accurate translation.</text>
</comment>
<comment type="subunit">
    <text evidence="1">Homodimer. Part of the ribosomal stalk of the 50S ribosomal subunit. Forms a multimeric L10(L12)X complex, where L10 forms an elongated spine to which 2 to 4 L12 dimers bind in a sequential fashion. Binds GTP-bound translation factors.</text>
</comment>
<comment type="similarity">
    <text evidence="1">Belongs to the bacterial ribosomal protein bL12 family.</text>
</comment>
<accession>Q2NWR7</accession>
<feature type="chain" id="PRO_0000243497" description="Large ribosomal subunit protein bL12">
    <location>
        <begin position="1"/>
        <end position="122"/>
    </location>
</feature>
<gene>
    <name evidence="1" type="primary">rplL</name>
    <name type="ordered locus">SG0133</name>
</gene>
<keyword id="KW-0687">Ribonucleoprotein</keyword>
<keyword id="KW-0689">Ribosomal protein</keyword>
<proteinExistence type="inferred from homology"/>
<sequence>MSITKEQILDAVAEMSVMDVVELISMMEEKFGVSAAAAVAVAAGGPAEAAEEKTEFDVVLSAIGANKVAVIKAVRGATGLGLKEAKDLVESAPATLKEGVSKDDAETLKKDLEQAGASVEVK</sequence>
<protein>
    <recommendedName>
        <fullName evidence="1">Large ribosomal subunit protein bL12</fullName>
    </recommendedName>
    <alternativeName>
        <fullName evidence="2">50S ribosomal protein L7/L12</fullName>
    </alternativeName>
</protein>
<dbReference type="EMBL" id="AP008232">
    <property type="protein sequence ID" value="BAE73408.1"/>
    <property type="molecule type" value="Genomic_DNA"/>
</dbReference>
<dbReference type="RefSeq" id="WP_011409997.1">
    <property type="nucleotide sequence ID" value="NC_007712.1"/>
</dbReference>
<dbReference type="SMR" id="Q2NWR7"/>
<dbReference type="STRING" id="343509.SG0133"/>
<dbReference type="KEGG" id="sgl:SG0133"/>
<dbReference type="eggNOG" id="COG0222">
    <property type="taxonomic scope" value="Bacteria"/>
</dbReference>
<dbReference type="HOGENOM" id="CLU_086499_3_2_6"/>
<dbReference type="OrthoDB" id="9811748at2"/>
<dbReference type="BioCyc" id="SGLO343509:SGP1_RS01120-MONOMER"/>
<dbReference type="Proteomes" id="UP000001932">
    <property type="component" value="Chromosome"/>
</dbReference>
<dbReference type="GO" id="GO:0022625">
    <property type="term" value="C:cytosolic large ribosomal subunit"/>
    <property type="evidence" value="ECO:0007669"/>
    <property type="project" value="TreeGrafter"/>
</dbReference>
<dbReference type="GO" id="GO:0003729">
    <property type="term" value="F:mRNA binding"/>
    <property type="evidence" value="ECO:0007669"/>
    <property type="project" value="TreeGrafter"/>
</dbReference>
<dbReference type="GO" id="GO:0003735">
    <property type="term" value="F:structural constituent of ribosome"/>
    <property type="evidence" value="ECO:0007669"/>
    <property type="project" value="InterPro"/>
</dbReference>
<dbReference type="GO" id="GO:0006412">
    <property type="term" value="P:translation"/>
    <property type="evidence" value="ECO:0007669"/>
    <property type="project" value="UniProtKB-UniRule"/>
</dbReference>
<dbReference type="CDD" id="cd00387">
    <property type="entry name" value="Ribosomal_L7_L12"/>
    <property type="match status" value="1"/>
</dbReference>
<dbReference type="FunFam" id="1.20.5.710:FF:000001">
    <property type="entry name" value="50S ribosomal protein L7/L12"/>
    <property type="match status" value="1"/>
</dbReference>
<dbReference type="FunFam" id="3.30.1390.10:FF:000001">
    <property type="entry name" value="50S ribosomal protein L7/L12"/>
    <property type="match status" value="1"/>
</dbReference>
<dbReference type="Gene3D" id="3.30.1390.10">
    <property type="match status" value="1"/>
</dbReference>
<dbReference type="Gene3D" id="1.20.5.710">
    <property type="entry name" value="Single helix bin"/>
    <property type="match status" value="1"/>
</dbReference>
<dbReference type="HAMAP" id="MF_00368">
    <property type="entry name" value="Ribosomal_bL12"/>
    <property type="match status" value="1"/>
</dbReference>
<dbReference type="InterPro" id="IPR000206">
    <property type="entry name" value="Ribosomal_bL12"/>
</dbReference>
<dbReference type="InterPro" id="IPR013823">
    <property type="entry name" value="Ribosomal_bL12_C"/>
</dbReference>
<dbReference type="InterPro" id="IPR014719">
    <property type="entry name" value="Ribosomal_bL12_C/ClpS-like"/>
</dbReference>
<dbReference type="InterPro" id="IPR008932">
    <property type="entry name" value="Ribosomal_bL12_oligo"/>
</dbReference>
<dbReference type="InterPro" id="IPR036235">
    <property type="entry name" value="Ribosomal_bL12_oligo_N_sf"/>
</dbReference>
<dbReference type="NCBIfam" id="TIGR00855">
    <property type="entry name" value="L12"/>
    <property type="match status" value="1"/>
</dbReference>
<dbReference type="PANTHER" id="PTHR45987">
    <property type="entry name" value="39S RIBOSOMAL PROTEIN L12"/>
    <property type="match status" value="1"/>
</dbReference>
<dbReference type="PANTHER" id="PTHR45987:SF4">
    <property type="entry name" value="LARGE RIBOSOMAL SUBUNIT PROTEIN BL12M"/>
    <property type="match status" value="1"/>
</dbReference>
<dbReference type="Pfam" id="PF00542">
    <property type="entry name" value="Ribosomal_L12"/>
    <property type="match status" value="1"/>
</dbReference>
<dbReference type="Pfam" id="PF16320">
    <property type="entry name" value="Ribosomal_L12_N"/>
    <property type="match status" value="1"/>
</dbReference>
<dbReference type="SUPFAM" id="SSF54736">
    <property type="entry name" value="ClpS-like"/>
    <property type="match status" value="1"/>
</dbReference>
<dbReference type="SUPFAM" id="SSF48300">
    <property type="entry name" value="Ribosomal protein L7/12, oligomerisation (N-terminal) domain"/>
    <property type="match status" value="1"/>
</dbReference>
<evidence type="ECO:0000255" key="1">
    <source>
        <dbReference type="HAMAP-Rule" id="MF_00368"/>
    </source>
</evidence>
<evidence type="ECO:0000305" key="2"/>
<name>RL7_SODGM</name>